<sequence length="680" mass="77674">MSAYAALQKMSGASSILYGINGESDNDESGTIGYLRNSSDEEVEAEEAEVPTTSTMAPTPNIIRTPSIVPKINSFICESNFIPNDDNFIVFHDHIIIGLKANEYILINGQSKMTIQRGAILINTGHYMFAHPNNCIPIIASQSQSLPIISSTQVVDRSGIKDSKTDENMHLFSSNYKSIIKLENLYTGLEKIGTYHPPFKRLFYSHAVIEDEDLTEYERLFKTYSFEIILRDRGCIGISIEKLWLNQIQLLISDIHEDLIPKTIMIIGNKNSGKSTLSKTLLNSLILANQNTVSYLDLDPGQSEFSMPYCLSLTNHSKPIIGMNVPKVSGDEDSVSHYYGFTTPQSQPSQYVSIIKALFREYDQVYRPRGHHLIINTPGWIKGYGKELLNELTAFINPNQLILLSNNTDNDNMDNSDNLSGLTFQNSRCFQGIYQTSKYSPFQLRMYNKLSYFHQVDTLKFDFNSHILLRSPLKLSYETVNSSKDFKGINMVSVLNYDTGLNFELNDLLSMIDTSIMGLYLIDHEYYSSLKASLKKSEDCDYLPQYLNSTDYVNLINYSSSNNIFMGLCMVHSINTKDEFFNIYLPGHNQHRLTEMITKRDYKMLLVKGDGDIPSPDLLMFDMLLKQQEDLKRLNKKRKKNPNVDDKDVLKIPYVTFENKNKIGGIWKTRRNVMRRSHQR</sequence>
<feature type="chain" id="PRO_0000087592" description="Polynucleotide 5'-hydroxyl-kinase GRC3">
    <location>
        <begin position="1"/>
        <end position="680"/>
    </location>
</feature>
<feature type="region of interest" description="Disordered" evidence="3">
    <location>
        <begin position="38"/>
        <end position="61"/>
    </location>
</feature>
<feature type="compositionally biased region" description="Acidic residues" evidence="3">
    <location>
        <begin position="40"/>
        <end position="49"/>
    </location>
</feature>
<feature type="compositionally biased region" description="Polar residues" evidence="3">
    <location>
        <begin position="51"/>
        <end position="61"/>
    </location>
</feature>
<feature type="binding site" evidence="2">
    <location>
        <begin position="268"/>
        <end position="275"/>
    </location>
    <ligand>
        <name>ATP</name>
        <dbReference type="ChEBI" id="CHEBI:30616"/>
    </ligand>
</feature>
<name>GRC3_DEBHA</name>
<gene>
    <name type="primary">GRC3</name>
    <name type="ordered locus">DEHA2E01892g</name>
</gene>
<dbReference type="EC" id="2.7.1.-"/>
<dbReference type="EMBL" id="CR382137">
    <property type="protein sequence ID" value="CAG87624.2"/>
    <property type="molecule type" value="Genomic_DNA"/>
</dbReference>
<dbReference type="RefSeq" id="XP_459413.2">
    <property type="nucleotide sequence ID" value="XM_459413.1"/>
</dbReference>
<dbReference type="SMR" id="Q6BQV7"/>
<dbReference type="FunCoup" id="Q6BQV7">
    <property type="interactions" value="160"/>
</dbReference>
<dbReference type="STRING" id="284592.Q6BQV7"/>
<dbReference type="GeneID" id="2902894"/>
<dbReference type="KEGG" id="dha:DEHA2E01892g"/>
<dbReference type="VEuPathDB" id="FungiDB:DEHA2E01892g"/>
<dbReference type="eggNOG" id="KOG2750">
    <property type="taxonomic scope" value="Eukaryota"/>
</dbReference>
<dbReference type="HOGENOM" id="CLU_010345_1_1_1"/>
<dbReference type="InParanoid" id="Q6BQV7"/>
<dbReference type="OMA" id="GEIPPCE"/>
<dbReference type="OrthoDB" id="4054781at2759"/>
<dbReference type="Proteomes" id="UP000000599">
    <property type="component" value="Chromosome E"/>
</dbReference>
<dbReference type="GO" id="GO:0005730">
    <property type="term" value="C:nucleolus"/>
    <property type="evidence" value="ECO:0007669"/>
    <property type="project" value="UniProtKB-SubCell"/>
</dbReference>
<dbReference type="GO" id="GO:0005524">
    <property type="term" value="F:ATP binding"/>
    <property type="evidence" value="ECO:0007669"/>
    <property type="project" value="UniProtKB-KW"/>
</dbReference>
<dbReference type="GO" id="GO:0051731">
    <property type="term" value="F:polynucleotide 5'-hydroxyl-kinase activity"/>
    <property type="evidence" value="ECO:0000250"/>
    <property type="project" value="UniProtKB"/>
</dbReference>
<dbReference type="GO" id="GO:0000448">
    <property type="term" value="P:cleavage in ITS2 between 5.8S rRNA and LSU-rRNA of tricistronic rRNA transcript (SSU-rRNA, 5.8S rRNA, LSU-rRNA)"/>
    <property type="evidence" value="ECO:0007669"/>
    <property type="project" value="TreeGrafter"/>
</dbReference>
<dbReference type="GO" id="GO:0006364">
    <property type="term" value="P:rRNA processing"/>
    <property type="evidence" value="ECO:0000250"/>
    <property type="project" value="UniProtKB"/>
</dbReference>
<dbReference type="FunFam" id="3.40.50.300:FF:003052">
    <property type="entry name" value="Polynucleotide 5'-hydroxyl-kinase nol-9"/>
    <property type="match status" value="1"/>
</dbReference>
<dbReference type="Gene3D" id="3.40.50.300">
    <property type="entry name" value="P-loop containing nucleotide triphosphate hydrolases"/>
    <property type="match status" value="1"/>
</dbReference>
<dbReference type="InterPro" id="IPR045116">
    <property type="entry name" value="Clp1/Grc3"/>
</dbReference>
<dbReference type="InterPro" id="IPR032319">
    <property type="entry name" value="CLP1_P"/>
</dbReference>
<dbReference type="InterPro" id="IPR027417">
    <property type="entry name" value="P-loop_NTPase"/>
</dbReference>
<dbReference type="PANTHER" id="PTHR12755">
    <property type="entry name" value="CLEAVAGE/POLYADENYLATION FACTOR IA SUBUNIT CLP1P"/>
    <property type="match status" value="1"/>
</dbReference>
<dbReference type="PANTHER" id="PTHR12755:SF3">
    <property type="entry name" value="POLYNUCLEOTIDE 5'-HYDROXYL-KINASE NOL9"/>
    <property type="match status" value="1"/>
</dbReference>
<dbReference type="Pfam" id="PF16575">
    <property type="entry name" value="CLP1_P"/>
    <property type="match status" value="1"/>
</dbReference>
<dbReference type="SUPFAM" id="SSF52540">
    <property type="entry name" value="P-loop containing nucleoside triphosphate hydrolases"/>
    <property type="match status" value="1"/>
</dbReference>
<reference key="1">
    <citation type="journal article" date="2004" name="Nature">
        <title>Genome evolution in yeasts.</title>
        <authorList>
            <person name="Dujon B."/>
            <person name="Sherman D."/>
            <person name="Fischer G."/>
            <person name="Durrens P."/>
            <person name="Casaregola S."/>
            <person name="Lafontaine I."/>
            <person name="de Montigny J."/>
            <person name="Marck C."/>
            <person name="Neuveglise C."/>
            <person name="Talla E."/>
            <person name="Goffard N."/>
            <person name="Frangeul L."/>
            <person name="Aigle M."/>
            <person name="Anthouard V."/>
            <person name="Babour A."/>
            <person name="Barbe V."/>
            <person name="Barnay S."/>
            <person name="Blanchin S."/>
            <person name="Beckerich J.-M."/>
            <person name="Beyne E."/>
            <person name="Bleykasten C."/>
            <person name="Boisrame A."/>
            <person name="Boyer J."/>
            <person name="Cattolico L."/>
            <person name="Confanioleri F."/>
            <person name="de Daruvar A."/>
            <person name="Despons L."/>
            <person name="Fabre E."/>
            <person name="Fairhead C."/>
            <person name="Ferry-Dumazet H."/>
            <person name="Groppi A."/>
            <person name="Hantraye F."/>
            <person name="Hennequin C."/>
            <person name="Jauniaux N."/>
            <person name="Joyet P."/>
            <person name="Kachouri R."/>
            <person name="Kerrest A."/>
            <person name="Koszul R."/>
            <person name="Lemaire M."/>
            <person name="Lesur I."/>
            <person name="Ma L."/>
            <person name="Muller H."/>
            <person name="Nicaud J.-M."/>
            <person name="Nikolski M."/>
            <person name="Oztas S."/>
            <person name="Ozier-Kalogeropoulos O."/>
            <person name="Pellenz S."/>
            <person name="Potier S."/>
            <person name="Richard G.-F."/>
            <person name="Straub M.-L."/>
            <person name="Suleau A."/>
            <person name="Swennen D."/>
            <person name="Tekaia F."/>
            <person name="Wesolowski-Louvel M."/>
            <person name="Westhof E."/>
            <person name="Wirth B."/>
            <person name="Zeniou-Meyer M."/>
            <person name="Zivanovic Y."/>
            <person name="Bolotin-Fukuhara M."/>
            <person name="Thierry A."/>
            <person name="Bouchier C."/>
            <person name="Caudron B."/>
            <person name="Scarpelli C."/>
            <person name="Gaillardin C."/>
            <person name="Weissenbach J."/>
            <person name="Wincker P."/>
            <person name="Souciet J.-L."/>
        </authorList>
    </citation>
    <scope>NUCLEOTIDE SEQUENCE [LARGE SCALE GENOMIC DNA]</scope>
    <source>
        <strain>ATCC 36239 / CBS 767 / BCRC 21394 / JCM 1990 / NBRC 0083 / IGC 2968</strain>
    </source>
</reference>
<keyword id="KW-0067">ATP-binding</keyword>
<keyword id="KW-0418">Kinase</keyword>
<keyword id="KW-0547">Nucleotide-binding</keyword>
<keyword id="KW-0539">Nucleus</keyword>
<keyword id="KW-1185">Reference proteome</keyword>
<keyword id="KW-0698">rRNA processing</keyword>
<keyword id="KW-0808">Transferase</keyword>
<protein>
    <recommendedName>
        <fullName>Polynucleotide 5'-hydroxyl-kinase GRC3</fullName>
        <ecNumber>2.7.1.-</ecNumber>
    </recommendedName>
</protein>
<organism>
    <name type="scientific">Debaryomyces hansenii (strain ATCC 36239 / CBS 767 / BCRC 21394 / JCM 1990 / NBRC 0083 / IGC 2968)</name>
    <name type="common">Yeast</name>
    <name type="synonym">Torulaspora hansenii</name>
    <dbReference type="NCBI Taxonomy" id="284592"/>
    <lineage>
        <taxon>Eukaryota</taxon>
        <taxon>Fungi</taxon>
        <taxon>Dikarya</taxon>
        <taxon>Ascomycota</taxon>
        <taxon>Saccharomycotina</taxon>
        <taxon>Pichiomycetes</taxon>
        <taxon>Debaryomycetaceae</taxon>
        <taxon>Debaryomyces</taxon>
    </lineage>
</organism>
<accession>Q6BQV7</accession>
<comment type="function">
    <text evidence="1">Polynucleotide 5'-kinase involved in rRNA processing.</text>
</comment>
<comment type="subcellular location">
    <subcellularLocation>
        <location evidence="1">Nucleus</location>
        <location evidence="1">Nucleolus</location>
    </subcellularLocation>
</comment>
<comment type="similarity">
    <text evidence="4">Belongs to the Clp1 family. NOL9/GRC3 subfamily.</text>
</comment>
<proteinExistence type="inferred from homology"/>
<evidence type="ECO:0000250" key="1"/>
<evidence type="ECO:0000255" key="2"/>
<evidence type="ECO:0000256" key="3">
    <source>
        <dbReference type="SAM" id="MobiDB-lite"/>
    </source>
</evidence>
<evidence type="ECO:0000305" key="4"/>